<accession>Q3SZN0</accession>
<organism>
    <name type="scientific">Bos taurus</name>
    <name type="common">Bovine</name>
    <dbReference type="NCBI Taxonomy" id="9913"/>
    <lineage>
        <taxon>Eukaryota</taxon>
        <taxon>Metazoa</taxon>
        <taxon>Chordata</taxon>
        <taxon>Craniata</taxon>
        <taxon>Vertebrata</taxon>
        <taxon>Euteleostomi</taxon>
        <taxon>Mammalia</taxon>
        <taxon>Eutheria</taxon>
        <taxon>Laurasiatheria</taxon>
        <taxon>Artiodactyla</taxon>
        <taxon>Ruminantia</taxon>
        <taxon>Pecora</taxon>
        <taxon>Bovidae</taxon>
        <taxon>Bovinae</taxon>
        <taxon>Bos</taxon>
    </lineage>
</organism>
<keyword id="KW-0007">Acetylation</keyword>
<keyword id="KW-0131">Cell cycle</keyword>
<keyword id="KW-0132">Cell division</keyword>
<keyword id="KW-0966">Cell projection</keyword>
<keyword id="KW-0137">Centromere</keyword>
<keyword id="KW-0158">Chromosome</keyword>
<keyword id="KW-0969">Cilium</keyword>
<keyword id="KW-0175">Coiled coil</keyword>
<keyword id="KW-0963">Cytoplasm</keyword>
<keyword id="KW-0206">Cytoskeleton</keyword>
<keyword id="KW-0221">Differentiation</keyword>
<keyword id="KW-0282">Flagellum</keyword>
<keyword id="KW-0342">GTP-binding</keyword>
<keyword id="KW-0995">Kinetochore</keyword>
<keyword id="KW-0547">Nucleotide-binding</keyword>
<keyword id="KW-0597">Phosphoprotein</keyword>
<keyword id="KW-1185">Reference proteome</keyword>
<keyword id="KW-0744">Spermatogenesis</keyword>
<dbReference type="EMBL" id="BC102779">
    <property type="protein sequence ID" value="AAI02780.1"/>
    <property type="molecule type" value="mRNA"/>
</dbReference>
<dbReference type="RefSeq" id="NP_001030507.1">
    <property type="nucleotide sequence ID" value="NM_001035430.2"/>
</dbReference>
<dbReference type="SMR" id="Q3SZN0"/>
<dbReference type="FunCoup" id="Q3SZN0">
    <property type="interactions" value="1254"/>
</dbReference>
<dbReference type="STRING" id="9913.ENSBTAP00000068495"/>
<dbReference type="PaxDb" id="9913-ENSBTAP00000005629"/>
<dbReference type="GeneID" id="540783"/>
<dbReference type="KEGG" id="bta:540783"/>
<dbReference type="CTD" id="23157"/>
<dbReference type="VEuPathDB" id="HostDB:ENSBTAG00000004291"/>
<dbReference type="eggNOG" id="KOG3859">
    <property type="taxonomic scope" value="Eukaryota"/>
</dbReference>
<dbReference type="HOGENOM" id="CLU_017718_8_1_1"/>
<dbReference type="InParanoid" id="Q3SZN0"/>
<dbReference type="OMA" id="NNGIHIY"/>
<dbReference type="OrthoDB" id="416553at2759"/>
<dbReference type="TreeFam" id="TF101080"/>
<dbReference type="Proteomes" id="UP000009136">
    <property type="component" value="Chromosome X"/>
</dbReference>
<dbReference type="Bgee" id="ENSBTAG00000004291">
    <property type="expression patterns" value="Expressed in thymus and 106 other cell types or tissues"/>
</dbReference>
<dbReference type="GO" id="GO:0032153">
    <property type="term" value="C:cell division site"/>
    <property type="evidence" value="ECO:0000318"/>
    <property type="project" value="GO_Central"/>
</dbReference>
<dbReference type="GO" id="GO:0032154">
    <property type="term" value="C:cleavage furrow"/>
    <property type="evidence" value="ECO:0007669"/>
    <property type="project" value="UniProtKB-SubCell"/>
</dbReference>
<dbReference type="GO" id="GO:0000776">
    <property type="term" value="C:kinetochore"/>
    <property type="evidence" value="ECO:0007669"/>
    <property type="project" value="UniProtKB-KW"/>
</dbReference>
<dbReference type="GO" id="GO:0015630">
    <property type="term" value="C:microtubule cytoskeleton"/>
    <property type="evidence" value="ECO:0000318"/>
    <property type="project" value="GO_Central"/>
</dbReference>
<dbReference type="GO" id="GO:0030496">
    <property type="term" value="C:midbody"/>
    <property type="evidence" value="ECO:0007669"/>
    <property type="project" value="UniProtKB-SubCell"/>
</dbReference>
<dbReference type="GO" id="GO:0031514">
    <property type="term" value="C:motile cilium"/>
    <property type="evidence" value="ECO:0007669"/>
    <property type="project" value="UniProtKB-SubCell"/>
</dbReference>
<dbReference type="GO" id="GO:0031105">
    <property type="term" value="C:septin complex"/>
    <property type="evidence" value="ECO:0000250"/>
    <property type="project" value="UniProtKB"/>
</dbReference>
<dbReference type="GO" id="GO:0005940">
    <property type="term" value="C:septin ring"/>
    <property type="evidence" value="ECO:0000318"/>
    <property type="project" value="GO_Central"/>
</dbReference>
<dbReference type="GO" id="GO:0005819">
    <property type="term" value="C:spindle"/>
    <property type="evidence" value="ECO:0007669"/>
    <property type="project" value="UniProtKB-SubCell"/>
</dbReference>
<dbReference type="GO" id="GO:0005525">
    <property type="term" value="F:GTP binding"/>
    <property type="evidence" value="ECO:0007669"/>
    <property type="project" value="UniProtKB-KW"/>
</dbReference>
<dbReference type="GO" id="GO:0003924">
    <property type="term" value="F:GTPase activity"/>
    <property type="evidence" value="ECO:0000318"/>
    <property type="project" value="GO_Central"/>
</dbReference>
<dbReference type="GO" id="GO:0060090">
    <property type="term" value="F:molecular adaptor activity"/>
    <property type="evidence" value="ECO:0000318"/>
    <property type="project" value="GO_Central"/>
</dbReference>
<dbReference type="GO" id="GO:0030154">
    <property type="term" value="P:cell differentiation"/>
    <property type="evidence" value="ECO:0007669"/>
    <property type="project" value="UniProtKB-KW"/>
</dbReference>
<dbReference type="GO" id="GO:0061640">
    <property type="term" value="P:cytoskeleton-dependent cytokinesis"/>
    <property type="evidence" value="ECO:0000318"/>
    <property type="project" value="GO_Central"/>
</dbReference>
<dbReference type="GO" id="GO:0008104">
    <property type="term" value="P:protein localization"/>
    <property type="evidence" value="ECO:0000318"/>
    <property type="project" value="GO_Central"/>
</dbReference>
<dbReference type="GO" id="GO:0007283">
    <property type="term" value="P:spermatogenesis"/>
    <property type="evidence" value="ECO:0007669"/>
    <property type="project" value="UniProtKB-KW"/>
</dbReference>
<dbReference type="CDD" id="cd01850">
    <property type="entry name" value="CDC_Septin"/>
    <property type="match status" value="1"/>
</dbReference>
<dbReference type="FunFam" id="3.40.50.300:FF:000036">
    <property type="entry name" value="septin-6 isoform X2"/>
    <property type="match status" value="1"/>
</dbReference>
<dbReference type="Gene3D" id="3.40.50.300">
    <property type="entry name" value="P-loop containing nucleotide triphosphate hydrolases"/>
    <property type="match status" value="1"/>
</dbReference>
<dbReference type="InterPro" id="IPR030379">
    <property type="entry name" value="G_SEPTIN_dom"/>
</dbReference>
<dbReference type="InterPro" id="IPR027417">
    <property type="entry name" value="P-loop_NTPase"/>
</dbReference>
<dbReference type="InterPro" id="IPR016491">
    <property type="entry name" value="Septin"/>
</dbReference>
<dbReference type="PANTHER" id="PTHR18884">
    <property type="entry name" value="SEPTIN"/>
    <property type="match status" value="1"/>
</dbReference>
<dbReference type="Pfam" id="PF00735">
    <property type="entry name" value="Septin"/>
    <property type="match status" value="1"/>
</dbReference>
<dbReference type="PIRSF" id="PIRSF006698">
    <property type="entry name" value="Septin"/>
    <property type="match status" value="1"/>
</dbReference>
<dbReference type="SUPFAM" id="SSF52540">
    <property type="entry name" value="P-loop containing nucleoside triphosphate hydrolases"/>
    <property type="match status" value="1"/>
</dbReference>
<dbReference type="PROSITE" id="PS51719">
    <property type="entry name" value="G_SEPTIN"/>
    <property type="match status" value="1"/>
</dbReference>
<proteinExistence type="evidence at transcript level"/>
<feature type="initiator methionine" description="Removed" evidence="2">
    <location>
        <position position="1"/>
    </location>
</feature>
<feature type="chain" id="PRO_0000239733" description="Septin-6">
    <location>
        <begin position="2"/>
        <end position="427"/>
    </location>
</feature>
<feature type="domain" description="Septin-type G" evidence="4">
    <location>
        <begin position="39"/>
        <end position="305"/>
    </location>
</feature>
<feature type="region of interest" description="G1 motif" evidence="4">
    <location>
        <begin position="49"/>
        <end position="56"/>
    </location>
</feature>
<feature type="region of interest" description="G3 motif" evidence="4">
    <location>
        <begin position="101"/>
        <end position="104"/>
    </location>
</feature>
<feature type="region of interest" description="G4 motif" evidence="4">
    <location>
        <begin position="184"/>
        <end position="187"/>
    </location>
</feature>
<feature type="region of interest" description="Disordered" evidence="5">
    <location>
        <begin position="405"/>
        <end position="427"/>
    </location>
</feature>
<feature type="coiled-coil region" evidence="3">
    <location>
        <begin position="321"/>
        <end position="416"/>
    </location>
</feature>
<feature type="compositionally biased region" description="Low complexity" evidence="5">
    <location>
        <begin position="407"/>
        <end position="417"/>
    </location>
</feature>
<feature type="binding site" evidence="1">
    <location>
        <begin position="49"/>
        <end position="56"/>
    </location>
    <ligand>
        <name>GTP</name>
        <dbReference type="ChEBI" id="CHEBI:37565"/>
    </ligand>
</feature>
<feature type="binding site" evidence="1">
    <location>
        <position position="104"/>
    </location>
    <ligand>
        <name>GTP</name>
        <dbReference type="ChEBI" id="CHEBI:37565"/>
    </ligand>
</feature>
<feature type="binding site" evidence="1">
    <location>
        <begin position="185"/>
        <end position="193"/>
    </location>
    <ligand>
        <name>GTP</name>
        <dbReference type="ChEBI" id="CHEBI:37565"/>
    </ligand>
</feature>
<feature type="binding site" evidence="1">
    <location>
        <position position="239"/>
    </location>
    <ligand>
        <name>GTP</name>
        <dbReference type="ChEBI" id="CHEBI:37565"/>
    </ligand>
</feature>
<feature type="binding site" evidence="1">
    <location>
        <position position="254"/>
    </location>
    <ligand>
        <name>GTP</name>
        <dbReference type="ChEBI" id="CHEBI:37565"/>
    </ligand>
</feature>
<feature type="modified residue" description="N-acetylalanine" evidence="2">
    <location>
        <position position="2"/>
    </location>
</feature>
<feature type="modified residue" description="Phosphoserine" evidence="2">
    <location>
        <position position="27"/>
    </location>
</feature>
<feature type="modified residue" description="N6-acetyllysine" evidence="2">
    <location>
        <position position="367"/>
    </location>
</feature>
<feature type="modified residue" description="Phosphoserine" evidence="2">
    <location>
        <position position="416"/>
    </location>
</feature>
<feature type="modified residue" description="Phosphothreonine" evidence="2">
    <location>
        <position position="418"/>
    </location>
</feature>
<gene>
    <name evidence="2" type="primary">SEPTIN6</name>
    <name type="synonym">SEPT6</name>
</gene>
<sequence length="427" mass="48775">MAATDIARQVGEGCRTVPLAGHVGFDSLPDQLVNKSVSQGFCFNILCVGETGLGKSTLMDTLFNTKFEGEPATHTQPGVQLRSNTYDLQESNVGLKLTIVSTVGFGDQINKEDSYKPIVEFIDAQFEAYLQEELKIRRVLHTYHDSRIHACLYFIAPTGHSLKSLDLVTMKKLDSKVNIIPIIAKSDAISKSELTKFKIKITSELVNNGVQIYQFPTDDESVAEINGTMNAHLPFAVIGSTEELKIGNKMMKARQYPWGTVQVENEAHCDFVKLREMLIRVNMEDLREQTHSRHYELYRRCKLEEMGFKDTDPDSKPFSLQETYEAKRNEFLGELQKKEEEMRQMFVQRVKEKEAELKEAEKELHEKFDRLKKLHQDEKKKLEDKKKSLDDEVNAFKQRKTAAELLQSQGSQAGGSQTLKRDKEKKN</sequence>
<comment type="function">
    <text evidence="1 2">Filament-forming cytoskeletal GTPase. Required for normal organization of the actin cytoskeleton. Involved in cytokinesis. Forms a filamentous structure with SEPTIN12, SEPTIN6, SEPTIN2 and probably SEPTIN4 at the sperm annulus which is required for the structural integrity and motility of the sperm tail during postmeiotic differentiation (By similarity).</text>
</comment>
<comment type="subunit">
    <text evidence="1">Septins polymerize into heterooligomeric protein complexes that form filaments, and associate with cellular membranes, actin filaments and microtubules. GTPase activity is required for filament formation. Filaments are assembled from asymmetrical heterotrimers, composed of SEPTIN2, SEPTIN6 and SEPTIN7 that associate head-to-head to form a hexameric unit. Within the trimer, directly interacts with SEPTIN2 and SEPTIN7. Also interacts with SEPTIN9 and SEPTIN12. Interaction with SEPTIN12 alters filament structure. Component of a septin core octameric complex consisting of SEPTIN12, SEPTIN7, SEPTIN6 and SEPTIN2 or SEPTIN4 in the order 12-7-6-2-2-6-7-12 or 12-7-6-4-4-6-7-12 and located in the sperm annulus. Interacts with SOCS7. Interacts with HNRNPA1 (By similarity).</text>
</comment>
<comment type="subcellular location">
    <subcellularLocation>
        <location>Cytoplasm</location>
    </subcellularLocation>
    <subcellularLocation>
        <location>Cytoplasm</location>
        <location>Cytoskeleton</location>
        <location>Spindle</location>
    </subcellularLocation>
    <subcellularLocation>
        <location evidence="1">Chromosome</location>
        <location evidence="1">Centromere</location>
        <location evidence="1">Kinetochore</location>
    </subcellularLocation>
    <subcellularLocation>
        <location evidence="1">Cleavage furrow</location>
    </subcellularLocation>
    <subcellularLocation>
        <location evidence="1">Midbody</location>
    </subcellularLocation>
    <subcellularLocation>
        <location evidence="2">Cell projection</location>
        <location evidence="2">Cilium</location>
        <location evidence="2">Flagellum</location>
    </subcellularLocation>
    <text evidence="1 2">In metaphase cells, localized within the microtubule spindle. At the metaphase plate, in close apposition to the kinetochores of the congressed chromosomes. In cells undergoing cytokinesis, localized to the midbody, the ingressing cleavage furrow, and the central spindle. Found in the sperm annulus (By similarity).</text>
</comment>
<comment type="miscellaneous">
    <text evidence="1">Coordinated expression with SEPTIN2 and SEPTIN7.</text>
</comment>
<comment type="similarity">
    <text evidence="4">Belongs to the TRAFAC class TrmE-Era-EngA-EngB-Septin-like GTPase superfamily. Septin GTPase family.</text>
</comment>
<evidence type="ECO:0000250" key="1"/>
<evidence type="ECO:0000250" key="2">
    <source>
        <dbReference type="UniProtKB" id="Q14141"/>
    </source>
</evidence>
<evidence type="ECO:0000255" key="3"/>
<evidence type="ECO:0000255" key="4">
    <source>
        <dbReference type="PROSITE-ProRule" id="PRU01056"/>
    </source>
</evidence>
<evidence type="ECO:0000256" key="5">
    <source>
        <dbReference type="SAM" id="MobiDB-lite"/>
    </source>
</evidence>
<protein>
    <recommendedName>
        <fullName>Septin-6</fullName>
    </recommendedName>
</protein>
<reference key="1">
    <citation type="submission" date="2005-08" db="EMBL/GenBank/DDBJ databases">
        <authorList>
            <consortium name="NIH - Mammalian Gene Collection (MGC) project"/>
        </authorList>
    </citation>
    <scope>NUCLEOTIDE SEQUENCE [LARGE SCALE MRNA]</scope>
    <source>
        <strain>Crossbred X Angus</strain>
        <tissue>Ileum</tissue>
    </source>
</reference>
<name>SEPT6_BOVIN</name>